<evidence type="ECO:0000255" key="1">
    <source>
        <dbReference type="HAMAP-Rule" id="MF_00535"/>
    </source>
</evidence>
<accession>Q391E0</accession>
<keyword id="KW-0456">Lyase</keyword>
<reference key="1">
    <citation type="submission" date="2005-10" db="EMBL/GenBank/DDBJ databases">
        <title>Complete sequence of chromosome 2 of Burkholderia sp. 383.</title>
        <authorList>
            <consortium name="US DOE Joint Genome Institute"/>
            <person name="Copeland A."/>
            <person name="Lucas S."/>
            <person name="Lapidus A."/>
            <person name="Barry K."/>
            <person name="Detter J.C."/>
            <person name="Glavina T."/>
            <person name="Hammon N."/>
            <person name="Israni S."/>
            <person name="Pitluck S."/>
            <person name="Chain P."/>
            <person name="Malfatti S."/>
            <person name="Shin M."/>
            <person name="Vergez L."/>
            <person name="Schmutz J."/>
            <person name="Larimer F."/>
            <person name="Land M."/>
            <person name="Kyrpides N."/>
            <person name="Lykidis A."/>
            <person name="Richardson P."/>
        </authorList>
    </citation>
    <scope>NUCLEOTIDE SEQUENCE [LARGE SCALE GENOMIC DNA]</scope>
    <source>
        <strain>ATCC 17760 / DSM 23089 / LMG 22485 / NCIMB 9086 / R18194 / 383</strain>
    </source>
</reference>
<feature type="chain" id="PRO_1000051474" description="Cyanate hydratase">
    <location>
        <begin position="1"/>
        <end position="156"/>
    </location>
</feature>
<feature type="active site" evidence="1">
    <location>
        <position position="96"/>
    </location>
</feature>
<feature type="active site" evidence="1">
    <location>
        <position position="99"/>
    </location>
</feature>
<feature type="active site" evidence="1">
    <location>
        <position position="122"/>
    </location>
</feature>
<dbReference type="EC" id="4.2.1.104" evidence="1"/>
<dbReference type="EMBL" id="CP000152">
    <property type="protein sequence ID" value="ABB12926.1"/>
    <property type="molecule type" value="Genomic_DNA"/>
</dbReference>
<dbReference type="RefSeq" id="WP_011356405.1">
    <property type="nucleotide sequence ID" value="NC_007511.1"/>
</dbReference>
<dbReference type="SMR" id="Q391E0"/>
<dbReference type="GeneID" id="45099121"/>
<dbReference type="KEGG" id="bur:Bcep18194_B2815"/>
<dbReference type="PATRIC" id="fig|482957.22.peg.6627"/>
<dbReference type="HOGENOM" id="CLU_103452_1_1_4"/>
<dbReference type="Proteomes" id="UP000002705">
    <property type="component" value="Chromosome 2"/>
</dbReference>
<dbReference type="GO" id="GO:0008824">
    <property type="term" value="F:cyanate hydratase activity"/>
    <property type="evidence" value="ECO:0007669"/>
    <property type="project" value="UniProtKB-UniRule"/>
</dbReference>
<dbReference type="GO" id="GO:0003677">
    <property type="term" value="F:DNA binding"/>
    <property type="evidence" value="ECO:0007669"/>
    <property type="project" value="InterPro"/>
</dbReference>
<dbReference type="GO" id="GO:0009439">
    <property type="term" value="P:cyanate metabolic process"/>
    <property type="evidence" value="ECO:0007669"/>
    <property type="project" value="UniProtKB-UniRule"/>
</dbReference>
<dbReference type="CDD" id="cd00559">
    <property type="entry name" value="Cyanase_C"/>
    <property type="match status" value="1"/>
</dbReference>
<dbReference type="FunFam" id="3.30.1160.10:FF:000001">
    <property type="entry name" value="Cyanate hydratase"/>
    <property type="match status" value="1"/>
</dbReference>
<dbReference type="Gene3D" id="3.30.1160.10">
    <property type="entry name" value="Cyanate lyase, C-terminal domain"/>
    <property type="match status" value="1"/>
</dbReference>
<dbReference type="Gene3D" id="1.10.260.40">
    <property type="entry name" value="lambda repressor-like DNA-binding domains"/>
    <property type="match status" value="1"/>
</dbReference>
<dbReference type="HAMAP" id="MF_00535">
    <property type="entry name" value="Cyanate_hydrat"/>
    <property type="match status" value="1"/>
</dbReference>
<dbReference type="InterPro" id="IPR008076">
    <property type="entry name" value="Cyanase"/>
</dbReference>
<dbReference type="InterPro" id="IPR003712">
    <property type="entry name" value="Cyanate_lyase_C"/>
</dbReference>
<dbReference type="InterPro" id="IPR036581">
    <property type="entry name" value="Cyanate_lyase_C_sf"/>
</dbReference>
<dbReference type="InterPro" id="IPR048564">
    <property type="entry name" value="CYNS_N"/>
</dbReference>
<dbReference type="InterPro" id="IPR010982">
    <property type="entry name" value="Lambda_DNA-bd_dom_sf"/>
</dbReference>
<dbReference type="NCBIfam" id="TIGR00673">
    <property type="entry name" value="cynS"/>
    <property type="match status" value="1"/>
</dbReference>
<dbReference type="NCBIfam" id="NF002773">
    <property type="entry name" value="PRK02866.1"/>
    <property type="match status" value="1"/>
</dbReference>
<dbReference type="PANTHER" id="PTHR34186">
    <property type="entry name" value="CYANATE HYDRATASE"/>
    <property type="match status" value="1"/>
</dbReference>
<dbReference type="PANTHER" id="PTHR34186:SF2">
    <property type="entry name" value="CYANATE HYDRATASE"/>
    <property type="match status" value="1"/>
</dbReference>
<dbReference type="Pfam" id="PF02560">
    <property type="entry name" value="Cyanate_lyase"/>
    <property type="match status" value="1"/>
</dbReference>
<dbReference type="Pfam" id="PF21291">
    <property type="entry name" value="CYNS_N"/>
    <property type="match status" value="1"/>
</dbReference>
<dbReference type="PIRSF" id="PIRSF001263">
    <property type="entry name" value="Cyanate_hydratas"/>
    <property type="match status" value="1"/>
</dbReference>
<dbReference type="PRINTS" id="PR01693">
    <property type="entry name" value="CYANASE"/>
</dbReference>
<dbReference type="SMART" id="SM01116">
    <property type="entry name" value="Cyanate_lyase"/>
    <property type="match status" value="1"/>
</dbReference>
<dbReference type="SUPFAM" id="SSF55234">
    <property type="entry name" value="Cyanase C-terminal domain"/>
    <property type="match status" value="1"/>
</dbReference>
<dbReference type="SUPFAM" id="SSF47413">
    <property type="entry name" value="lambda repressor-like DNA-binding domains"/>
    <property type="match status" value="1"/>
</dbReference>
<name>CYNS_BURL3</name>
<gene>
    <name evidence="1" type="primary">cynS</name>
    <name type="ordered locus">Bcep18194_B2815</name>
</gene>
<sequence length="156" mass="16960">MIQSQHSQTARHALAETVVLAKARKNLSFAQLTEGTGLSEAFVTAALLGQHALPVDAARNVADKLGLDDDAVLLLQSIPLRGSIDDRVPTDPTIYRFYEMLQVYGTTLKALVHEKFGDGIISAINFRLDVKKVDDPEGGSRAVITLDGKYLPTKPF</sequence>
<comment type="function">
    <text evidence="1">Catalyzes the reaction of cyanate with bicarbonate to produce ammonia and carbon dioxide.</text>
</comment>
<comment type="catalytic activity">
    <reaction evidence="1">
        <text>cyanate + hydrogencarbonate + 3 H(+) = NH4(+) + 2 CO2</text>
        <dbReference type="Rhea" id="RHEA:11120"/>
        <dbReference type="ChEBI" id="CHEBI:15378"/>
        <dbReference type="ChEBI" id="CHEBI:16526"/>
        <dbReference type="ChEBI" id="CHEBI:17544"/>
        <dbReference type="ChEBI" id="CHEBI:28938"/>
        <dbReference type="ChEBI" id="CHEBI:29195"/>
        <dbReference type="EC" id="4.2.1.104"/>
    </reaction>
</comment>
<comment type="similarity">
    <text evidence="1">Belongs to the cyanase family.</text>
</comment>
<protein>
    <recommendedName>
        <fullName evidence="1">Cyanate hydratase</fullName>
        <shortName evidence="1">Cyanase</shortName>
        <ecNumber evidence="1">4.2.1.104</ecNumber>
    </recommendedName>
    <alternativeName>
        <fullName evidence="1">Cyanate hydrolase</fullName>
    </alternativeName>
    <alternativeName>
        <fullName evidence="1">Cyanate lyase</fullName>
    </alternativeName>
</protein>
<proteinExistence type="inferred from homology"/>
<organism>
    <name type="scientific">Burkholderia lata (strain ATCC 17760 / DSM 23089 / LMG 22485 / NCIMB 9086 / R18194 / 383)</name>
    <dbReference type="NCBI Taxonomy" id="482957"/>
    <lineage>
        <taxon>Bacteria</taxon>
        <taxon>Pseudomonadati</taxon>
        <taxon>Pseudomonadota</taxon>
        <taxon>Betaproteobacteria</taxon>
        <taxon>Burkholderiales</taxon>
        <taxon>Burkholderiaceae</taxon>
        <taxon>Burkholderia</taxon>
        <taxon>Burkholderia cepacia complex</taxon>
    </lineage>
</organism>